<reference key="1">
    <citation type="submission" date="2004-11" db="EMBL/GenBank/DDBJ databases">
        <authorList>
            <consortium name="The German cDNA consortium"/>
        </authorList>
    </citation>
    <scope>NUCLEOTIDE SEQUENCE [LARGE SCALE MRNA]</scope>
    <source>
        <tissue>Brain cortex</tissue>
    </source>
</reference>
<proteinExistence type="inferred from homology"/>
<evidence type="ECO:0000250" key="1">
    <source>
        <dbReference type="UniProtKB" id="Q0VGL1"/>
    </source>
</evidence>
<evidence type="ECO:0000305" key="2"/>
<sequence>MTSALTQGLERIPDQLGYLVLSEGAVLASSGDLENDEQAASAISELVSTACGFRLHRGMNVPFKRLSVVFGEHTLLVTVSGQRVFVVKRQNRGREPIDV</sequence>
<accession>Q5R483</accession>
<name>LTOR4_PONAB</name>
<gene>
    <name type="primary">LAMTOR4</name>
</gene>
<organism>
    <name type="scientific">Pongo abelii</name>
    <name type="common">Sumatran orangutan</name>
    <name type="synonym">Pongo pygmaeus abelii</name>
    <dbReference type="NCBI Taxonomy" id="9601"/>
    <lineage>
        <taxon>Eukaryota</taxon>
        <taxon>Metazoa</taxon>
        <taxon>Chordata</taxon>
        <taxon>Craniata</taxon>
        <taxon>Vertebrata</taxon>
        <taxon>Euteleostomi</taxon>
        <taxon>Mammalia</taxon>
        <taxon>Eutheria</taxon>
        <taxon>Euarchontoglires</taxon>
        <taxon>Primates</taxon>
        <taxon>Haplorrhini</taxon>
        <taxon>Catarrhini</taxon>
        <taxon>Hominidae</taxon>
        <taxon>Pongo</taxon>
    </lineage>
</organism>
<protein>
    <recommendedName>
        <fullName>Ragulator complex protein LAMTOR4</fullName>
    </recommendedName>
    <alternativeName>
        <fullName>Late endosomal/lysosomal adaptor and MAPK and MTOR activator 4</fullName>
    </alternativeName>
    <component>
        <recommendedName>
            <fullName>Ragulator complex protein LAMTOR4, N-terminally processed</fullName>
        </recommendedName>
    </component>
</protein>
<comment type="function">
    <text evidence="1">As part of the Ragulator complex it is involved in amino acid sensing and activation of mTORC1, a signaling complex promoting cell growth in response to growth factors, energy levels, and amino acids. Activated by amino acids through a mechanism involving the lysosomal V-ATPase, the Ragulator plays a dual role for the small GTPases Rag (RagA/RRAGA, RagB/RRAGB, RagC/RRAGC and/or RagD/RRAGD): it (1) acts as a guanine nucleotide exchange factor (GEF), activating the small GTPases Rag and (2) mediates recruitment of Rag GTPases to the lysosome membrane. Activated Ragulator and Rag GTPases function as a scaffold recruiting mTORC1 to lysosomes where it is in turn activated.</text>
</comment>
<comment type="subunit">
    <text evidence="1">Part of the Ragulator complex composed of LAMTOR1, LAMTOR2, LAMTOR3, LAMTOR4 and LAMTOR5. LAMTOR4 and LAMTOR5 form a heterodimer that interacts, through LAMTOR1, with a LAMTOR2, LAMTOR3 heterodimer. The Ragulator complex interacts with both the mTORC1 complex and heterodimers constituted of the Rag GTPases RagA/RRAGA, RagB/RRAGB, RagC/RRAGC and RagD/RRAGD; regulated by amino acid availability. The Ragulator complex interacts with SLC38A9; the probable amino acid sensor. Component of the lysosomal folliculin complex (LFC), composed of FLCN, FNIP1 (or FNIP2), RagA/RRAGA or RagB/RRAGB GDP-bound, RagC/RRAGC or RagD/RRAGD GTP-bound, and Ragulator.</text>
</comment>
<comment type="subcellular location">
    <subcellularLocation>
        <location evidence="1">Lysosome</location>
    </subcellularLocation>
</comment>
<comment type="PTM">
    <text evidence="1">Phosphorylation at Ser-67 by PKA inhibits Ragulator complex assembly.</text>
</comment>
<comment type="similarity">
    <text evidence="2">Belongs to the LAMTOR4 family.</text>
</comment>
<dbReference type="EMBL" id="CR861373">
    <property type="protein sequence ID" value="CAH93433.1"/>
    <property type="molecule type" value="mRNA"/>
</dbReference>
<dbReference type="RefSeq" id="NP_001127010.1">
    <property type="nucleotide sequence ID" value="NM_001133538.1"/>
</dbReference>
<dbReference type="RefSeq" id="XP_054415022.1">
    <property type="nucleotide sequence ID" value="XM_054559047.2"/>
</dbReference>
<dbReference type="SMR" id="Q5R483"/>
<dbReference type="FunCoup" id="Q5R483">
    <property type="interactions" value="1374"/>
</dbReference>
<dbReference type="STRING" id="9601.ENSPPYP00000019501"/>
<dbReference type="GeneID" id="100174034"/>
<dbReference type="KEGG" id="pon:100174034"/>
<dbReference type="CTD" id="389541"/>
<dbReference type="eggNOG" id="ENOG502S3B2">
    <property type="taxonomic scope" value="Eukaryota"/>
</dbReference>
<dbReference type="HOGENOM" id="CLU_137556_1_0_1"/>
<dbReference type="InParanoid" id="Q5R483"/>
<dbReference type="OrthoDB" id="275011at2759"/>
<dbReference type="TreeFam" id="TF324352"/>
<dbReference type="Proteomes" id="UP000001595">
    <property type="component" value="Chromosome 7"/>
</dbReference>
<dbReference type="GO" id="GO:0005765">
    <property type="term" value="C:lysosomal membrane"/>
    <property type="evidence" value="ECO:0000250"/>
    <property type="project" value="UniProtKB"/>
</dbReference>
<dbReference type="GO" id="GO:0005764">
    <property type="term" value="C:lysosome"/>
    <property type="evidence" value="ECO:0000250"/>
    <property type="project" value="UniProtKB"/>
</dbReference>
<dbReference type="GO" id="GO:0071986">
    <property type="term" value="C:Ragulator complex"/>
    <property type="evidence" value="ECO:0000250"/>
    <property type="project" value="UniProtKB"/>
</dbReference>
<dbReference type="GO" id="GO:0005085">
    <property type="term" value="F:guanyl-nucleotide exchange factor activity"/>
    <property type="evidence" value="ECO:0007669"/>
    <property type="project" value="TreeGrafter"/>
</dbReference>
<dbReference type="GO" id="GO:0071230">
    <property type="term" value="P:cellular response to amino acid stimulus"/>
    <property type="evidence" value="ECO:0000250"/>
    <property type="project" value="UniProtKB"/>
</dbReference>
<dbReference type="GO" id="GO:0032008">
    <property type="term" value="P:positive regulation of TOR signaling"/>
    <property type="evidence" value="ECO:0000250"/>
    <property type="project" value="UniProtKB"/>
</dbReference>
<dbReference type="GO" id="GO:1904263">
    <property type="term" value="P:positive regulation of TORC1 signaling"/>
    <property type="evidence" value="ECO:0000250"/>
    <property type="project" value="UniProtKB"/>
</dbReference>
<dbReference type="GO" id="GO:0061462">
    <property type="term" value="P:protein localization to lysosome"/>
    <property type="evidence" value="ECO:0000250"/>
    <property type="project" value="UniProtKB"/>
</dbReference>
<dbReference type="GO" id="GO:0008361">
    <property type="term" value="P:regulation of cell size"/>
    <property type="evidence" value="ECO:0000250"/>
    <property type="project" value="UniProtKB"/>
</dbReference>
<dbReference type="InterPro" id="IPR034601">
    <property type="entry name" value="LAMTOR4"/>
</dbReference>
<dbReference type="PANTHER" id="PTHR33967">
    <property type="entry name" value="RAGULATOR COMPLEX PROTEIN LAMTOR4"/>
    <property type="match status" value="1"/>
</dbReference>
<dbReference type="PANTHER" id="PTHR33967:SF1">
    <property type="entry name" value="RAGULATOR COMPLEX PROTEIN LAMTOR4"/>
    <property type="match status" value="1"/>
</dbReference>
<keyword id="KW-0007">Acetylation</keyword>
<keyword id="KW-0458">Lysosome</keyword>
<keyword id="KW-0597">Phosphoprotein</keyword>
<keyword id="KW-1185">Reference proteome</keyword>
<feature type="chain" id="PRO_0000424500" description="Ragulator complex protein LAMTOR4">
    <location>
        <begin position="1"/>
        <end position="99"/>
    </location>
</feature>
<feature type="initiator methionine" description="Removed; alternate" evidence="1">
    <location>
        <position position="1"/>
    </location>
</feature>
<feature type="chain" id="PRO_0000325843" description="Ragulator complex protein LAMTOR4, N-terminally processed">
    <location>
        <begin position="2"/>
        <end position="99"/>
    </location>
</feature>
<feature type="modified residue" description="N-acetylmethionine" evidence="1">
    <location>
        <position position="1"/>
    </location>
</feature>
<feature type="modified residue" description="N-acetylthreonine; in Ragulator complex protein LAMTOR4, N-terminally processed" evidence="1">
    <location>
        <position position="2"/>
    </location>
</feature>
<feature type="modified residue" description="Phosphoserine" evidence="1">
    <location>
        <position position="67"/>
    </location>
</feature>